<dbReference type="EMBL" id="CP001321">
    <property type="protein sequence ID" value="ACL33427.1"/>
    <property type="molecule type" value="Genomic_DNA"/>
</dbReference>
<dbReference type="RefSeq" id="WP_005714607.1">
    <property type="nucleotide sequence ID" value="NC_011852.1"/>
</dbReference>
<dbReference type="SMR" id="B8F7X5"/>
<dbReference type="STRING" id="557723.HAPS_1943"/>
<dbReference type="KEGG" id="hap:HAPS_1943"/>
<dbReference type="HOGENOM" id="CLU_100590_5_1_6"/>
<dbReference type="Proteomes" id="UP000006743">
    <property type="component" value="Chromosome"/>
</dbReference>
<dbReference type="GO" id="GO:0005737">
    <property type="term" value="C:cytoplasm"/>
    <property type="evidence" value="ECO:0007669"/>
    <property type="project" value="UniProtKB-ARBA"/>
</dbReference>
<dbReference type="GO" id="GO:0015935">
    <property type="term" value="C:small ribosomal subunit"/>
    <property type="evidence" value="ECO:0007669"/>
    <property type="project" value="TreeGrafter"/>
</dbReference>
<dbReference type="GO" id="GO:0003735">
    <property type="term" value="F:structural constituent of ribosome"/>
    <property type="evidence" value="ECO:0007669"/>
    <property type="project" value="InterPro"/>
</dbReference>
<dbReference type="GO" id="GO:0006412">
    <property type="term" value="P:translation"/>
    <property type="evidence" value="ECO:0007669"/>
    <property type="project" value="UniProtKB-UniRule"/>
</dbReference>
<dbReference type="FunFam" id="3.30.1320.10:FF:000001">
    <property type="entry name" value="30S ribosomal protein S16"/>
    <property type="match status" value="1"/>
</dbReference>
<dbReference type="Gene3D" id="3.30.1320.10">
    <property type="match status" value="1"/>
</dbReference>
<dbReference type="HAMAP" id="MF_00385">
    <property type="entry name" value="Ribosomal_bS16"/>
    <property type="match status" value="1"/>
</dbReference>
<dbReference type="InterPro" id="IPR000307">
    <property type="entry name" value="Ribosomal_bS16"/>
</dbReference>
<dbReference type="InterPro" id="IPR020592">
    <property type="entry name" value="Ribosomal_bS16_CS"/>
</dbReference>
<dbReference type="InterPro" id="IPR023803">
    <property type="entry name" value="Ribosomal_bS16_dom_sf"/>
</dbReference>
<dbReference type="NCBIfam" id="TIGR00002">
    <property type="entry name" value="S16"/>
    <property type="match status" value="1"/>
</dbReference>
<dbReference type="PANTHER" id="PTHR12919">
    <property type="entry name" value="30S RIBOSOMAL PROTEIN S16"/>
    <property type="match status" value="1"/>
</dbReference>
<dbReference type="PANTHER" id="PTHR12919:SF20">
    <property type="entry name" value="SMALL RIBOSOMAL SUBUNIT PROTEIN BS16M"/>
    <property type="match status" value="1"/>
</dbReference>
<dbReference type="Pfam" id="PF00886">
    <property type="entry name" value="Ribosomal_S16"/>
    <property type="match status" value="1"/>
</dbReference>
<dbReference type="SUPFAM" id="SSF54565">
    <property type="entry name" value="Ribosomal protein S16"/>
    <property type="match status" value="1"/>
</dbReference>
<dbReference type="PROSITE" id="PS00732">
    <property type="entry name" value="RIBOSOMAL_S16"/>
    <property type="match status" value="1"/>
</dbReference>
<evidence type="ECO:0000255" key="1">
    <source>
        <dbReference type="HAMAP-Rule" id="MF_00385"/>
    </source>
</evidence>
<evidence type="ECO:0000305" key="2"/>
<comment type="similarity">
    <text evidence="1">Belongs to the bacterial ribosomal protein bS16 family.</text>
</comment>
<organism>
    <name type="scientific">Glaesserella parasuis serovar 5 (strain SH0165)</name>
    <name type="common">Haemophilus parasuis</name>
    <dbReference type="NCBI Taxonomy" id="557723"/>
    <lineage>
        <taxon>Bacteria</taxon>
        <taxon>Pseudomonadati</taxon>
        <taxon>Pseudomonadota</taxon>
        <taxon>Gammaproteobacteria</taxon>
        <taxon>Pasteurellales</taxon>
        <taxon>Pasteurellaceae</taxon>
        <taxon>Glaesserella</taxon>
    </lineage>
</organism>
<keyword id="KW-1185">Reference proteome</keyword>
<keyword id="KW-0687">Ribonucleoprotein</keyword>
<keyword id="KW-0689">Ribosomal protein</keyword>
<protein>
    <recommendedName>
        <fullName evidence="1">Small ribosomal subunit protein bS16</fullName>
    </recommendedName>
    <alternativeName>
        <fullName evidence="2">30S ribosomal protein S16</fullName>
    </alternativeName>
</protein>
<sequence length="82" mass="9042">MVTIRLSRGGAKKRPFYQIVVADSRSPRDGRFIERIGFFNPIATGNAERLRLDVAKVDAWVAKGASLSDRVAVLVKEARKAA</sequence>
<name>RS16_GLAP5</name>
<feature type="chain" id="PRO_1000196413" description="Small ribosomal subunit protein bS16">
    <location>
        <begin position="1"/>
        <end position="82"/>
    </location>
</feature>
<reference key="1">
    <citation type="journal article" date="2009" name="J. Bacteriol.">
        <title>Complete genome sequence of Haemophilus parasuis SH0165.</title>
        <authorList>
            <person name="Yue M."/>
            <person name="Yang F."/>
            <person name="Yang J."/>
            <person name="Bei W."/>
            <person name="Cai X."/>
            <person name="Chen L."/>
            <person name="Dong J."/>
            <person name="Zhou R."/>
            <person name="Jin M."/>
            <person name="Jin Q."/>
            <person name="Chen H."/>
        </authorList>
    </citation>
    <scope>NUCLEOTIDE SEQUENCE [LARGE SCALE GENOMIC DNA]</scope>
    <source>
        <strain>SH0165</strain>
    </source>
</reference>
<proteinExistence type="inferred from homology"/>
<accession>B8F7X5</accession>
<gene>
    <name evidence="1" type="primary">rpsP</name>
    <name type="ordered locus">HAPS_1943</name>
</gene>